<protein>
    <recommendedName>
        <fullName evidence="1">Peptidyl-tRNA hydrolase</fullName>
        <shortName evidence="1">Pth</shortName>
        <ecNumber evidence="1">3.1.1.29</ecNumber>
    </recommendedName>
</protein>
<name>PTH_STAA1</name>
<gene>
    <name evidence="1" type="primary">pth</name>
    <name type="ordered locus">SAHV_0499</name>
</gene>
<keyword id="KW-0963">Cytoplasm</keyword>
<keyword id="KW-0378">Hydrolase</keyword>
<keyword id="KW-0694">RNA-binding</keyword>
<keyword id="KW-0820">tRNA-binding</keyword>
<reference key="1">
    <citation type="journal article" date="2008" name="Antimicrob. Agents Chemother.">
        <title>Mutated response regulator graR is responsible for phenotypic conversion of Staphylococcus aureus from heterogeneous vancomycin-intermediate resistance to vancomycin-intermediate resistance.</title>
        <authorList>
            <person name="Neoh H.-M."/>
            <person name="Cui L."/>
            <person name="Yuzawa H."/>
            <person name="Takeuchi F."/>
            <person name="Matsuo M."/>
            <person name="Hiramatsu K."/>
        </authorList>
    </citation>
    <scope>NUCLEOTIDE SEQUENCE [LARGE SCALE GENOMIC DNA]</scope>
    <source>
        <strain>Mu3 / ATCC 700698</strain>
    </source>
</reference>
<evidence type="ECO:0000255" key="1">
    <source>
        <dbReference type="HAMAP-Rule" id="MF_00083"/>
    </source>
</evidence>
<organism>
    <name type="scientific">Staphylococcus aureus (strain Mu3 / ATCC 700698)</name>
    <dbReference type="NCBI Taxonomy" id="418127"/>
    <lineage>
        <taxon>Bacteria</taxon>
        <taxon>Bacillati</taxon>
        <taxon>Bacillota</taxon>
        <taxon>Bacilli</taxon>
        <taxon>Bacillales</taxon>
        <taxon>Staphylococcaceae</taxon>
        <taxon>Staphylococcus</taxon>
    </lineage>
</organism>
<proteinExistence type="inferred from homology"/>
<dbReference type="EC" id="3.1.1.29" evidence="1"/>
<dbReference type="EMBL" id="AP009324">
    <property type="protein sequence ID" value="BAF77382.1"/>
    <property type="molecule type" value="Genomic_DNA"/>
</dbReference>
<dbReference type="RefSeq" id="WP_000649791.1">
    <property type="nucleotide sequence ID" value="NZ_CTYB01000022.1"/>
</dbReference>
<dbReference type="SMR" id="A7WYQ5"/>
<dbReference type="KEGG" id="saw:SAHV_0499"/>
<dbReference type="HOGENOM" id="CLU_062456_4_1_9"/>
<dbReference type="GO" id="GO:0005737">
    <property type="term" value="C:cytoplasm"/>
    <property type="evidence" value="ECO:0007669"/>
    <property type="project" value="UniProtKB-SubCell"/>
</dbReference>
<dbReference type="GO" id="GO:0004045">
    <property type="term" value="F:peptidyl-tRNA hydrolase activity"/>
    <property type="evidence" value="ECO:0007669"/>
    <property type="project" value="UniProtKB-UniRule"/>
</dbReference>
<dbReference type="GO" id="GO:0000049">
    <property type="term" value="F:tRNA binding"/>
    <property type="evidence" value="ECO:0007669"/>
    <property type="project" value="UniProtKB-UniRule"/>
</dbReference>
<dbReference type="GO" id="GO:0006515">
    <property type="term" value="P:protein quality control for misfolded or incompletely synthesized proteins"/>
    <property type="evidence" value="ECO:0007669"/>
    <property type="project" value="UniProtKB-UniRule"/>
</dbReference>
<dbReference type="GO" id="GO:0072344">
    <property type="term" value="P:rescue of stalled ribosome"/>
    <property type="evidence" value="ECO:0007669"/>
    <property type="project" value="UniProtKB-UniRule"/>
</dbReference>
<dbReference type="CDD" id="cd00462">
    <property type="entry name" value="PTH"/>
    <property type="match status" value="1"/>
</dbReference>
<dbReference type="FunFam" id="3.40.50.1470:FF:000001">
    <property type="entry name" value="Peptidyl-tRNA hydrolase"/>
    <property type="match status" value="1"/>
</dbReference>
<dbReference type="Gene3D" id="3.40.50.1470">
    <property type="entry name" value="Peptidyl-tRNA hydrolase"/>
    <property type="match status" value="1"/>
</dbReference>
<dbReference type="HAMAP" id="MF_00083">
    <property type="entry name" value="Pept_tRNA_hydro_bact"/>
    <property type="match status" value="1"/>
</dbReference>
<dbReference type="InterPro" id="IPR001328">
    <property type="entry name" value="Pept_tRNA_hydro"/>
</dbReference>
<dbReference type="InterPro" id="IPR018171">
    <property type="entry name" value="Pept_tRNA_hydro_CS"/>
</dbReference>
<dbReference type="InterPro" id="IPR036416">
    <property type="entry name" value="Pept_tRNA_hydro_sf"/>
</dbReference>
<dbReference type="NCBIfam" id="TIGR00447">
    <property type="entry name" value="pth"/>
    <property type="match status" value="1"/>
</dbReference>
<dbReference type="PANTHER" id="PTHR17224">
    <property type="entry name" value="PEPTIDYL-TRNA HYDROLASE"/>
    <property type="match status" value="1"/>
</dbReference>
<dbReference type="PANTHER" id="PTHR17224:SF1">
    <property type="entry name" value="PEPTIDYL-TRNA HYDROLASE"/>
    <property type="match status" value="1"/>
</dbReference>
<dbReference type="Pfam" id="PF01195">
    <property type="entry name" value="Pept_tRNA_hydro"/>
    <property type="match status" value="1"/>
</dbReference>
<dbReference type="SUPFAM" id="SSF53178">
    <property type="entry name" value="Peptidyl-tRNA hydrolase-like"/>
    <property type="match status" value="1"/>
</dbReference>
<dbReference type="PROSITE" id="PS01195">
    <property type="entry name" value="PEPT_TRNA_HYDROL_1"/>
    <property type="match status" value="1"/>
</dbReference>
<dbReference type="PROSITE" id="PS01196">
    <property type="entry name" value="PEPT_TRNA_HYDROL_2"/>
    <property type="match status" value="1"/>
</dbReference>
<comment type="function">
    <text evidence="1">Hydrolyzes ribosome-free peptidyl-tRNAs (with 1 or more amino acids incorporated), which drop off the ribosome during protein synthesis, or as a result of ribosome stalling.</text>
</comment>
<comment type="function">
    <text evidence="1">Catalyzes the release of premature peptidyl moieties from peptidyl-tRNA molecules trapped in stalled 50S ribosomal subunits, and thus maintains levels of free tRNAs and 50S ribosomes.</text>
</comment>
<comment type="catalytic activity">
    <reaction evidence="1">
        <text>an N-acyl-L-alpha-aminoacyl-tRNA + H2O = an N-acyl-L-amino acid + a tRNA + H(+)</text>
        <dbReference type="Rhea" id="RHEA:54448"/>
        <dbReference type="Rhea" id="RHEA-COMP:10123"/>
        <dbReference type="Rhea" id="RHEA-COMP:13883"/>
        <dbReference type="ChEBI" id="CHEBI:15377"/>
        <dbReference type="ChEBI" id="CHEBI:15378"/>
        <dbReference type="ChEBI" id="CHEBI:59874"/>
        <dbReference type="ChEBI" id="CHEBI:78442"/>
        <dbReference type="ChEBI" id="CHEBI:138191"/>
        <dbReference type="EC" id="3.1.1.29"/>
    </reaction>
</comment>
<comment type="subunit">
    <text evidence="1">Monomer.</text>
</comment>
<comment type="subcellular location">
    <subcellularLocation>
        <location evidence="1">Cytoplasm</location>
    </subcellularLocation>
</comment>
<comment type="similarity">
    <text evidence="1">Belongs to the PTH family.</text>
</comment>
<accession>A7WYQ5</accession>
<sequence>MKCIVGLGNIGKRFELTRHNIGFEVVDYILEKNNFSLDKQKFKGAYTIERMNGDKVLFIEPMTMMNLSGEAVAPIMDYYNVNPEDLIVLYDDLDLEQGQVRLRQKGSAGGHNGMKSIIKMLGTDQFKRIRIGVGRPTNGMTVPDYVLQRFSNDEMVTMEKVIEHAARAIEKFVETSRFDHVMNEFNGEVK</sequence>
<feature type="chain" id="PRO_1000010654" description="Peptidyl-tRNA hydrolase">
    <location>
        <begin position="1"/>
        <end position="190"/>
    </location>
</feature>
<feature type="active site" description="Proton acceptor" evidence="1">
    <location>
        <position position="19"/>
    </location>
</feature>
<feature type="binding site" evidence="1">
    <location>
        <position position="14"/>
    </location>
    <ligand>
        <name>tRNA</name>
        <dbReference type="ChEBI" id="CHEBI:17843"/>
    </ligand>
</feature>
<feature type="binding site" evidence="1">
    <location>
        <position position="64"/>
    </location>
    <ligand>
        <name>tRNA</name>
        <dbReference type="ChEBI" id="CHEBI:17843"/>
    </ligand>
</feature>
<feature type="binding site" evidence="1">
    <location>
        <position position="66"/>
    </location>
    <ligand>
        <name>tRNA</name>
        <dbReference type="ChEBI" id="CHEBI:17843"/>
    </ligand>
</feature>
<feature type="binding site" evidence="1">
    <location>
        <position position="112"/>
    </location>
    <ligand>
        <name>tRNA</name>
        <dbReference type="ChEBI" id="CHEBI:17843"/>
    </ligand>
</feature>
<feature type="site" description="Discriminates between blocked and unblocked aminoacyl-tRNA" evidence="1">
    <location>
        <position position="9"/>
    </location>
</feature>
<feature type="site" description="Stabilizes the basic form of H active site to accept a proton" evidence="1">
    <location>
        <position position="91"/>
    </location>
</feature>